<name>Y1914_BRUME</name>
<protein>
    <recommendedName>
        <fullName>UPF0324 membrane protein BMEI1914</fullName>
    </recommendedName>
</protein>
<evidence type="ECO:0000255" key="1"/>
<evidence type="ECO:0000305" key="2"/>
<keyword id="KW-1003">Cell membrane</keyword>
<keyword id="KW-0472">Membrane</keyword>
<keyword id="KW-0812">Transmembrane</keyword>
<keyword id="KW-1133">Transmembrane helix</keyword>
<dbReference type="EMBL" id="AE008917">
    <property type="protein sequence ID" value="AAL53095.1"/>
    <property type="molecule type" value="Genomic_DNA"/>
</dbReference>
<dbReference type="PIR" id="AD3491">
    <property type="entry name" value="AD3491"/>
</dbReference>
<dbReference type="KEGG" id="bme:BMEI1914"/>
<dbReference type="eggNOG" id="COG2855">
    <property type="taxonomic scope" value="Bacteria"/>
</dbReference>
<dbReference type="Proteomes" id="UP000000419">
    <property type="component" value="Chromosome I"/>
</dbReference>
<dbReference type="GO" id="GO:0005886">
    <property type="term" value="C:plasma membrane"/>
    <property type="evidence" value="ECO:0007669"/>
    <property type="project" value="UniProtKB-SubCell"/>
</dbReference>
<dbReference type="InterPro" id="IPR018383">
    <property type="entry name" value="UPF0324_pro"/>
</dbReference>
<dbReference type="PANTHER" id="PTHR30106">
    <property type="entry name" value="INNER MEMBRANE PROTEIN YEIH-RELATED"/>
    <property type="match status" value="1"/>
</dbReference>
<dbReference type="PANTHER" id="PTHR30106:SF2">
    <property type="entry name" value="UPF0324 INNER MEMBRANE PROTEIN YEIH"/>
    <property type="match status" value="1"/>
</dbReference>
<dbReference type="Pfam" id="PF03601">
    <property type="entry name" value="Cons_hypoth698"/>
    <property type="match status" value="1"/>
</dbReference>
<proteinExistence type="inferred from homology"/>
<comment type="subcellular location">
    <subcellularLocation>
        <location evidence="2">Cell membrane</location>
        <topology evidence="2">Multi-pass membrane protein</topology>
    </subcellularLocation>
</comment>
<comment type="similarity">
    <text evidence="2">Belongs to the UPF0324 family.</text>
</comment>
<reference key="1">
    <citation type="journal article" date="2002" name="Proc. Natl. Acad. Sci. U.S.A.">
        <title>The genome sequence of the facultative intracellular pathogen Brucella melitensis.</title>
        <authorList>
            <person name="DelVecchio V.G."/>
            <person name="Kapatral V."/>
            <person name="Redkar R.J."/>
            <person name="Patra G."/>
            <person name="Mujer C."/>
            <person name="Los T."/>
            <person name="Ivanova N."/>
            <person name="Anderson I."/>
            <person name="Bhattacharyya A."/>
            <person name="Lykidis A."/>
            <person name="Reznik G."/>
            <person name="Jablonski L."/>
            <person name="Larsen N."/>
            <person name="D'Souza M."/>
            <person name="Bernal A."/>
            <person name="Mazur M."/>
            <person name="Goltsman E."/>
            <person name="Selkov E."/>
            <person name="Elzer P.H."/>
            <person name="Hagius S."/>
            <person name="O'Callaghan D."/>
            <person name="Letesson J.-J."/>
            <person name="Haselkorn R."/>
            <person name="Kyrpides N.C."/>
            <person name="Overbeek R."/>
        </authorList>
    </citation>
    <scope>NUCLEOTIDE SEQUENCE [LARGE SCALE GENOMIC DNA]</scope>
    <source>
        <strain>ATCC 23456 / CCUG 17765 / NCTC 10094 / 16M</strain>
    </source>
</reference>
<feature type="chain" id="PRO_0000157401" description="UPF0324 membrane protein BMEI1914">
    <location>
        <begin position="1"/>
        <end position="357"/>
    </location>
</feature>
<feature type="transmembrane region" description="Helical" evidence="1">
    <location>
        <begin position="29"/>
        <end position="48"/>
    </location>
</feature>
<feature type="transmembrane region" description="Helical" evidence="1">
    <location>
        <begin position="58"/>
        <end position="77"/>
    </location>
</feature>
<feature type="transmembrane region" description="Helical" evidence="1">
    <location>
        <begin position="90"/>
        <end position="112"/>
    </location>
</feature>
<feature type="transmembrane region" description="Helical" evidence="1">
    <location>
        <begin position="117"/>
        <end position="136"/>
    </location>
</feature>
<feature type="transmembrane region" description="Helical" evidence="1">
    <location>
        <begin position="149"/>
        <end position="171"/>
    </location>
</feature>
<feature type="transmembrane region" description="Helical" evidence="1">
    <location>
        <begin position="181"/>
        <end position="203"/>
    </location>
</feature>
<feature type="transmembrane region" description="Helical" evidence="1">
    <location>
        <begin position="210"/>
        <end position="232"/>
    </location>
</feature>
<feature type="transmembrane region" description="Helical" evidence="1">
    <location>
        <begin position="242"/>
        <end position="261"/>
    </location>
</feature>
<feature type="transmembrane region" description="Helical" evidence="1">
    <location>
        <begin position="268"/>
        <end position="290"/>
    </location>
</feature>
<feature type="transmembrane region" description="Helical" evidence="1">
    <location>
        <begin position="300"/>
        <end position="322"/>
    </location>
</feature>
<feature type="transmembrane region" description="Helical" evidence="1">
    <location>
        <begin position="334"/>
        <end position="356"/>
    </location>
</feature>
<accession>Q8YEG4</accession>
<gene>
    <name type="ordered locus">BMEI1914</name>
</gene>
<organism>
    <name type="scientific">Brucella melitensis biotype 1 (strain ATCC 23456 / CCUG 17765 / NCTC 10094 / 16M)</name>
    <dbReference type="NCBI Taxonomy" id="224914"/>
    <lineage>
        <taxon>Bacteria</taxon>
        <taxon>Pseudomonadati</taxon>
        <taxon>Pseudomonadota</taxon>
        <taxon>Alphaproteobacteria</taxon>
        <taxon>Hyphomicrobiales</taxon>
        <taxon>Brucellaceae</taxon>
        <taxon>Brucella/Ochrobactrum group</taxon>
        <taxon>Brucella</taxon>
    </lineage>
</organism>
<sequence>MNRKIRASDRKIIPPQCEMPKMTYSKIQNILPGLGLSVAITAAAMVLEKIEEHYAGRAWLEALVIAILLGTAVRSLARPGPRFNKGINFSAKLLLEIAVVLLGASISASAVIEAGSGLIFGIAAVVAVAITLSYGIGRLLKLPHRMAVLVACGNSICGNSAIAAMAPVIGAESEDVAASIAFTAILGVIVVLTLPLLVPLLGLSFTQYGILAGLTVYAVPQVLAATAPVSLLSVQLGTLVKLVRVLMLGPVILVFALISGNKNADVKPGFFQLVPWFIIGFLAMMALHSLHLIPEAILPAIQYASMLLTIISMAALGLGVDIRSVASAGGRVTLTAILSLIALCCISLGLIHMLGVA</sequence>